<feature type="chain" id="PRO_0000361804" description="Protein pelota homolog">
    <location>
        <begin position="1"/>
        <end position="347"/>
    </location>
</feature>
<gene>
    <name evidence="1" type="primary">pelA</name>
    <name type="ordered locus">Mthe_0626</name>
</gene>
<proteinExistence type="inferred from homology"/>
<organism>
    <name type="scientific">Methanothrix thermoacetophila (strain DSM 6194 / JCM 14653 / NBRC 101360 / PT)</name>
    <name type="common">Methanosaeta thermophila</name>
    <dbReference type="NCBI Taxonomy" id="349307"/>
    <lineage>
        <taxon>Archaea</taxon>
        <taxon>Methanobacteriati</taxon>
        <taxon>Methanobacteriota</taxon>
        <taxon>Stenosarchaea group</taxon>
        <taxon>Methanomicrobia</taxon>
        <taxon>Methanotrichales</taxon>
        <taxon>Methanotrichaceae</taxon>
        <taxon>Methanothrix</taxon>
    </lineage>
</organism>
<protein>
    <recommendedName>
        <fullName evidence="1">Protein pelota homolog</fullName>
        <ecNumber evidence="1">3.1.-.-</ecNumber>
    </recommendedName>
</protein>
<keyword id="KW-0963">Cytoplasm</keyword>
<keyword id="KW-0255">Endonuclease</keyword>
<keyword id="KW-0378">Hydrolase</keyword>
<keyword id="KW-0479">Metal-binding</keyword>
<keyword id="KW-0540">Nuclease</keyword>
<keyword id="KW-1185">Reference proteome</keyword>
<accession>A0B6U3</accession>
<comment type="function">
    <text evidence="1">May function in recognizing stalled ribosomes, interact with stem-loop structures in stalled mRNA molecules, and effect endonucleolytic cleavage of the mRNA. May play a role in the release non-functional ribosomes and degradation of damaged mRNAs. Has endoribonuclease activity.</text>
</comment>
<comment type="cofactor">
    <cofactor evidence="1">
        <name>a divalent metal cation</name>
        <dbReference type="ChEBI" id="CHEBI:60240"/>
    </cofactor>
</comment>
<comment type="subunit">
    <text evidence="1">Monomer.</text>
</comment>
<comment type="subcellular location">
    <subcellularLocation>
        <location evidence="1">Cytoplasm</location>
    </subcellularLocation>
</comment>
<comment type="domain">
    <text evidence="1">The N-terminal domain has the RNA-binding Sm fold. It harbors the endoribonuclease activity.</text>
</comment>
<comment type="similarity">
    <text evidence="1">Belongs to the eukaryotic release factor 1 family. Pelota subfamily.</text>
</comment>
<comment type="sequence caution" evidence="2">
    <conflict type="erroneous initiation">
        <sequence resource="EMBL-CDS" id="ABK14417"/>
    </conflict>
</comment>
<evidence type="ECO:0000255" key="1">
    <source>
        <dbReference type="HAMAP-Rule" id="MF_01853"/>
    </source>
</evidence>
<evidence type="ECO:0000305" key="2"/>
<sequence length="347" mass="38281">MRVIKRNLRGDEGEISLVAESLDDLWHLKHLVSPGDLVFATTQRKISGATDKLRPEKAERRTVRLGISVEAVEFHTYSNWLRIHGVIKSGVDIGSYHTLNIEAGSELSIIKRWRPDELQRIEEAVAESNRPRVVLALVEEGEATIGVLRQFGVQTVAEIRGGSGKGSGSSVRDDFLKEVADQIANSAGDDAYVVLAGPGFTKEDLRKVMEARYPDLLKRLTMDDASSTGRSGFQEVLRRGTVDRIVEASRISRETRLMDDLMKEIATDGRAAYGIREVREAANYGAIETLMIVDQLVRRGDVESLIRDVAAGRGRVVIFSTEFEPGERLEALGGVAALLRFRIPGAS</sequence>
<name>PELO_METTP</name>
<dbReference type="EC" id="3.1.-.-" evidence="1"/>
<dbReference type="EMBL" id="CP000477">
    <property type="protein sequence ID" value="ABK14417.1"/>
    <property type="status" value="ALT_INIT"/>
    <property type="molecule type" value="Genomic_DNA"/>
</dbReference>
<dbReference type="RefSeq" id="WP_175265732.1">
    <property type="nucleotide sequence ID" value="NC_008553.1"/>
</dbReference>
<dbReference type="SMR" id="A0B6U3"/>
<dbReference type="STRING" id="349307.Mthe_0626"/>
<dbReference type="GeneID" id="4461831"/>
<dbReference type="KEGG" id="mtp:Mthe_0626"/>
<dbReference type="HOGENOM" id="CLU_023334_0_0_2"/>
<dbReference type="OrthoDB" id="31300at2157"/>
<dbReference type="Proteomes" id="UP000000674">
    <property type="component" value="Chromosome"/>
</dbReference>
<dbReference type="GO" id="GO:0005737">
    <property type="term" value="C:cytoplasm"/>
    <property type="evidence" value="ECO:0007669"/>
    <property type="project" value="UniProtKB-SubCell"/>
</dbReference>
<dbReference type="GO" id="GO:0004519">
    <property type="term" value="F:endonuclease activity"/>
    <property type="evidence" value="ECO:0007669"/>
    <property type="project" value="UniProtKB-UniRule"/>
</dbReference>
<dbReference type="GO" id="GO:0046872">
    <property type="term" value="F:metal ion binding"/>
    <property type="evidence" value="ECO:0007669"/>
    <property type="project" value="UniProtKB-UniRule"/>
</dbReference>
<dbReference type="GO" id="GO:0070651">
    <property type="term" value="P:nonfunctional rRNA decay"/>
    <property type="evidence" value="ECO:0007669"/>
    <property type="project" value="TreeGrafter"/>
</dbReference>
<dbReference type="GO" id="GO:0070966">
    <property type="term" value="P:nuclear-transcribed mRNA catabolic process, no-go decay"/>
    <property type="evidence" value="ECO:0007669"/>
    <property type="project" value="InterPro"/>
</dbReference>
<dbReference type="GO" id="GO:0070481">
    <property type="term" value="P:nuclear-transcribed mRNA catabolic process, non-stop decay"/>
    <property type="evidence" value="ECO:0007669"/>
    <property type="project" value="InterPro"/>
</dbReference>
<dbReference type="GO" id="GO:0032790">
    <property type="term" value="P:ribosome disassembly"/>
    <property type="evidence" value="ECO:0007669"/>
    <property type="project" value="TreeGrafter"/>
</dbReference>
<dbReference type="GO" id="GO:0071025">
    <property type="term" value="P:RNA surveillance"/>
    <property type="evidence" value="ECO:0007669"/>
    <property type="project" value="InterPro"/>
</dbReference>
<dbReference type="FunFam" id="2.30.30.870:FF:000002">
    <property type="entry name" value="Protein pelota homolog"/>
    <property type="match status" value="1"/>
</dbReference>
<dbReference type="Gene3D" id="3.30.1330.30">
    <property type="match status" value="1"/>
</dbReference>
<dbReference type="Gene3D" id="3.30.420.60">
    <property type="entry name" value="eRF1 domain 2"/>
    <property type="match status" value="1"/>
</dbReference>
<dbReference type="Gene3D" id="2.30.30.870">
    <property type="entry name" value="Pelota, domain A"/>
    <property type="match status" value="1"/>
</dbReference>
<dbReference type="HAMAP" id="MF_01853">
    <property type="entry name" value="PelO"/>
    <property type="match status" value="1"/>
</dbReference>
<dbReference type="InterPro" id="IPR042226">
    <property type="entry name" value="eFR1_2_sf"/>
</dbReference>
<dbReference type="InterPro" id="IPR005140">
    <property type="entry name" value="eRF1_1_Pelota"/>
</dbReference>
<dbReference type="InterPro" id="IPR005141">
    <property type="entry name" value="eRF1_2"/>
</dbReference>
<dbReference type="InterPro" id="IPR005142">
    <property type="entry name" value="eRF1_3"/>
</dbReference>
<dbReference type="InterPro" id="IPR038069">
    <property type="entry name" value="Pelota/DOM34_N"/>
</dbReference>
<dbReference type="InterPro" id="IPR023521">
    <property type="entry name" value="Pelota_arc"/>
</dbReference>
<dbReference type="InterPro" id="IPR029064">
    <property type="entry name" value="Ribosomal_eL30-like_sf"/>
</dbReference>
<dbReference type="InterPro" id="IPR004405">
    <property type="entry name" value="Transl-rel_pelota"/>
</dbReference>
<dbReference type="NCBIfam" id="TIGR00111">
    <property type="entry name" value="pelota"/>
    <property type="match status" value="1"/>
</dbReference>
<dbReference type="PANTHER" id="PTHR10853">
    <property type="entry name" value="PELOTA"/>
    <property type="match status" value="1"/>
</dbReference>
<dbReference type="PANTHER" id="PTHR10853:SF0">
    <property type="entry name" value="PROTEIN PELOTA HOMOLOG"/>
    <property type="match status" value="1"/>
</dbReference>
<dbReference type="Pfam" id="PF03463">
    <property type="entry name" value="eRF1_1"/>
    <property type="match status" value="1"/>
</dbReference>
<dbReference type="Pfam" id="PF03464">
    <property type="entry name" value="eRF1_2"/>
    <property type="match status" value="1"/>
</dbReference>
<dbReference type="Pfam" id="PF03465">
    <property type="entry name" value="eRF1_3"/>
    <property type="match status" value="1"/>
</dbReference>
<dbReference type="SMART" id="SM01194">
    <property type="entry name" value="eRF1_1"/>
    <property type="match status" value="1"/>
</dbReference>
<dbReference type="SUPFAM" id="SSF159065">
    <property type="entry name" value="Dom34/Pelota N-terminal domain-like"/>
    <property type="match status" value="1"/>
</dbReference>
<dbReference type="SUPFAM" id="SSF55315">
    <property type="entry name" value="L30e-like"/>
    <property type="match status" value="1"/>
</dbReference>
<dbReference type="SUPFAM" id="SSF53137">
    <property type="entry name" value="Translational machinery components"/>
    <property type="match status" value="1"/>
</dbReference>
<reference key="1">
    <citation type="submission" date="2006-10" db="EMBL/GenBank/DDBJ databases">
        <title>Complete sequence of Methanosaeta thermophila PT.</title>
        <authorList>
            <consortium name="US DOE Joint Genome Institute"/>
            <person name="Copeland A."/>
            <person name="Lucas S."/>
            <person name="Lapidus A."/>
            <person name="Barry K."/>
            <person name="Detter J.C."/>
            <person name="Glavina del Rio T."/>
            <person name="Hammon N."/>
            <person name="Israni S."/>
            <person name="Pitluck S."/>
            <person name="Chain P."/>
            <person name="Malfatti S."/>
            <person name="Shin M."/>
            <person name="Vergez L."/>
            <person name="Schmutz J."/>
            <person name="Larimer F."/>
            <person name="Land M."/>
            <person name="Hauser L."/>
            <person name="Kyrpides N."/>
            <person name="Kim E."/>
            <person name="Smith K.S."/>
            <person name="Ingram-Smith C."/>
            <person name="Richardson P."/>
        </authorList>
    </citation>
    <scope>NUCLEOTIDE SEQUENCE [LARGE SCALE GENOMIC DNA]</scope>
    <source>
        <strain>DSM 6194 / JCM 14653 / NBRC 101360 / PT</strain>
    </source>
</reference>